<dbReference type="EMBL" id="CP000141">
    <property type="protein sequence ID" value="ABB14418.1"/>
    <property type="molecule type" value="Genomic_DNA"/>
</dbReference>
<dbReference type="RefSeq" id="WP_011345414.1">
    <property type="nucleotide sequence ID" value="NC_007503.1"/>
</dbReference>
<dbReference type="SMR" id="Q3A943"/>
<dbReference type="FunCoup" id="Q3A943">
    <property type="interactions" value="410"/>
</dbReference>
<dbReference type="STRING" id="246194.CHY_2548"/>
<dbReference type="KEGG" id="chy:CHY_2548"/>
<dbReference type="eggNOG" id="COG0712">
    <property type="taxonomic scope" value="Bacteria"/>
</dbReference>
<dbReference type="HOGENOM" id="CLU_085114_1_1_9"/>
<dbReference type="InParanoid" id="Q3A943"/>
<dbReference type="OrthoDB" id="9802471at2"/>
<dbReference type="Proteomes" id="UP000002706">
    <property type="component" value="Chromosome"/>
</dbReference>
<dbReference type="GO" id="GO:0005886">
    <property type="term" value="C:plasma membrane"/>
    <property type="evidence" value="ECO:0007669"/>
    <property type="project" value="UniProtKB-SubCell"/>
</dbReference>
<dbReference type="GO" id="GO:0045259">
    <property type="term" value="C:proton-transporting ATP synthase complex"/>
    <property type="evidence" value="ECO:0007669"/>
    <property type="project" value="UniProtKB-KW"/>
</dbReference>
<dbReference type="GO" id="GO:0046933">
    <property type="term" value="F:proton-transporting ATP synthase activity, rotational mechanism"/>
    <property type="evidence" value="ECO:0007669"/>
    <property type="project" value="UniProtKB-UniRule"/>
</dbReference>
<dbReference type="Gene3D" id="1.10.520.20">
    <property type="entry name" value="N-terminal domain of the delta subunit of the F1F0-ATP synthase"/>
    <property type="match status" value="1"/>
</dbReference>
<dbReference type="HAMAP" id="MF_01416">
    <property type="entry name" value="ATP_synth_delta_bact"/>
    <property type="match status" value="1"/>
</dbReference>
<dbReference type="InterPro" id="IPR026015">
    <property type="entry name" value="ATP_synth_OSCP/delta_N_sf"/>
</dbReference>
<dbReference type="InterPro" id="IPR020781">
    <property type="entry name" value="ATPase_OSCP/d_CS"/>
</dbReference>
<dbReference type="InterPro" id="IPR000711">
    <property type="entry name" value="ATPase_OSCP/dsu"/>
</dbReference>
<dbReference type="NCBIfam" id="TIGR01145">
    <property type="entry name" value="ATP_synt_delta"/>
    <property type="match status" value="1"/>
</dbReference>
<dbReference type="PANTHER" id="PTHR11910">
    <property type="entry name" value="ATP SYNTHASE DELTA CHAIN"/>
    <property type="match status" value="1"/>
</dbReference>
<dbReference type="Pfam" id="PF00213">
    <property type="entry name" value="OSCP"/>
    <property type="match status" value="1"/>
</dbReference>
<dbReference type="PRINTS" id="PR00125">
    <property type="entry name" value="ATPASEDELTA"/>
</dbReference>
<dbReference type="SUPFAM" id="SSF47928">
    <property type="entry name" value="N-terminal domain of the delta subunit of the F1F0-ATP synthase"/>
    <property type="match status" value="1"/>
</dbReference>
<dbReference type="PROSITE" id="PS00389">
    <property type="entry name" value="ATPASE_DELTA"/>
    <property type="match status" value="1"/>
</dbReference>
<gene>
    <name evidence="1" type="primary">atpH</name>
    <name type="ordered locus">CHY_2548</name>
</gene>
<name>ATPD_CARHZ</name>
<organism>
    <name type="scientific">Carboxydothermus hydrogenoformans (strain ATCC BAA-161 / DSM 6008 / Z-2901)</name>
    <dbReference type="NCBI Taxonomy" id="246194"/>
    <lineage>
        <taxon>Bacteria</taxon>
        <taxon>Bacillati</taxon>
        <taxon>Bacillota</taxon>
        <taxon>Clostridia</taxon>
        <taxon>Thermoanaerobacterales</taxon>
        <taxon>Thermoanaerobacteraceae</taxon>
        <taxon>Carboxydothermus</taxon>
    </lineage>
</organism>
<evidence type="ECO:0000255" key="1">
    <source>
        <dbReference type="HAMAP-Rule" id="MF_01416"/>
    </source>
</evidence>
<feature type="chain" id="PRO_0000370932" description="ATP synthase subunit delta">
    <location>
        <begin position="1"/>
        <end position="177"/>
    </location>
</feature>
<sequence>MKSLAVAKRYASALFELAREKGAIDSISHDFEVLEKAIQETPDVKKVLDNPVLIPAAKKELLEKLFPDFNPITKSFLKLLVDKRREVYLPEIIALFAEKLREERGEMLVEVESARELKGDLSDLIKEKLSRLTGKKVTMKVRTNPDLIGGIVVRVGNKVYDGSIKNQLYRLKRSIYG</sequence>
<accession>Q3A943</accession>
<proteinExistence type="inferred from homology"/>
<reference key="1">
    <citation type="journal article" date="2005" name="PLoS Genet.">
        <title>Life in hot carbon monoxide: the complete genome sequence of Carboxydothermus hydrogenoformans Z-2901.</title>
        <authorList>
            <person name="Wu M."/>
            <person name="Ren Q."/>
            <person name="Durkin A.S."/>
            <person name="Daugherty S.C."/>
            <person name="Brinkac L.M."/>
            <person name="Dodson R.J."/>
            <person name="Madupu R."/>
            <person name="Sullivan S.A."/>
            <person name="Kolonay J.F."/>
            <person name="Nelson W.C."/>
            <person name="Tallon L.J."/>
            <person name="Jones K.M."/>
            <person name="Ulrich L.E."/>
            <person name="Gonzalez J.M."/>
            <person name="Zhulin I.B."/>
            <person name="Robb F.T."/>
            <person name="Eisen J.A."/>
        </authorList>
    </citation>
    <scope>NUCLEOTIDE SEQUENCE [LARGE SCALE GENOMIC DNA]</scope>
    <source>
        <strain>ATCC BAA-161 / DSM 6008 / Z-2901</strain>
    </source>
</reference>
<comment type="function">
    <text evidence="1">F(1)F(0) ATP synthase produces ATP from ADP in the presence of a proton or sodium gradient. F-type ATPases consist of two structural domains, F(1) containing the extramembraneous catalytic core and F(0) containing the membrane proton channel, linked together by a central stalk and a peripheral stalk. During catalysis, ATP synthesis in the catalytic domain of F(1) is coupled via a rotary mechanism of the central stalk subunits to proton translocation.</text>
</comment>
<comment type="function">
    <text evidence="1">This protein is part of the stalk that links CF(0) to CF(1). It either transmits conformational changes from CF(0) to CF(1) or is implicated in proton conduction.</text>
</comment>
<comment type="subunit">
    <text evidence="1">F-type ATPases have 2 components, F(1) - the catalytic core - and F(0) - the membrane proton channel. F(1) has five subunits: alpha(3), beta(3), gamma(1), delta(1), epsilon(1). F(0) has three main subunits: a(1), b(2) and c(10-14). The alpha and beta chains form an alternating ring which encloses part of the gamma chain. F(1) is attached to F(0) by a central stalk formed by the gamma and epsilon chains, while a peripheral stalk is formed by the delta and b chains.</text>
</comment>
<comment type="subcellular location">
    <subcellularLocation>
        <location evidence="1">Cell membrane</location>
        <topology evidence="1">Peripheral membrane protein</topology>
    </subcellularLocation>
</comment>
<comment type="similarity">
    <text evidence="1">Belongs to the ATPase delta chain family.</text>
</comment>
<protein>
    <recommendedName>
        <fullName evidence="1">ATP synthase subunit delta</fullName>
    </recommendedName>
    <alternativeName>
        <fullName evidence="1">ATP synthase F(1) sector subunit delta</fullName>
    </alternativeName>
    <alternativeName>
        <fullName evidence="1">F-type ATPase subunit delta</fullName>
        <shortName evidence="1">F-ATPase subunit delta</shortName>
    </alternativeName>
</protein>
<keyword id="KW-0066">ATP synthesis</keyword>
<keyword id="KW-1003">Cell membrane</keyword>
<keyword id="KW-0139">CF(1)</keyword>
<keyword id="KW-0375">Hydrogen ion transport</keyword>
<keyword id="KW-0406">Ion transport</keyword>
<keyword id="KW-0472">Membrane</keyword>
<keyword id="KW-1185">Reference proteome</keyword>
<keyword id="KW-0813">Transport</keyword>